<protein>
    <recommendedName>
        <fullName>Pre-mRNA-splicing factor ISY1</fullName>
    </recommendedName>
</protein>
<sequence>MSRNTEKAQSSLNRFQALKNKEAGVLESNPNFRPKYVQSVDSLPQAEKWRSTIIGEISVKLTKIQDPALNEYQIRDINDSLNKLFNEKRSWEYHIKNLGGADYMHFNKDFNNAGKLSQLDSSGSHIKGYRYFGRAKELPDVKEVLMLQQKKGHANKSKHAKELEQNRLLNEQDQRIKADYYGVYDEINDGNDDIIASNERDIINQVNEVLGDEIIKPVDDINEYYVAHKAQGVDNLIEFEKNRGKKLFRKFKNNQHNDEADSNVITNFEKEVPTSDEVTKWIVNKKRAELIARLGINK</sequence>
<keyword id="KW-0963">Cytoplasm</keyword>
<keyword id="KW-0507">mRNA processing</keyword>
<keyword id="KW-0508">mRNA splicing</keyword>
<keyword id="KW-0539">Nucleus</keyword>
<keyword id="KW-1185">Reference proteome</keyword>
<keyword id="KW-0747">Spliceosome</keyword>
<proteinExistence type="inferred from homology"/>
<gene>
    <name type="primary">ISY1</name>
    <name type="ordered locus">DEHA2C13574g</name>
</gene>
<comment type="function">
    <text evidence="1">Involved in pre-mRNA splicing.</text>
</comment>
<comment type="subunit">
    <text evidence="1">Associated with the spliceosome.</text>
</comment>
<comment type="subcellular location">
    <subcellularLocation>
        <location evidence="1">Cytoplasm</location>
    </subcellularLocation>
    <subcellularLocation>
        <location evidence="1">Nucleus</location>
    </subcellularLocation>
</comment>
<comment type="similarity">
    <text evidence="2">Belongs to the ISY1 family.</text>
</comment>
<evidence type="ECO:0000250" key="1"/>
<evidence type="ECO:0000305" key="2"/>
<dbReference type="EMBL" id="CR382135">
    <property type="protein sequence ID" value="CAG86345.2"/>
    <property type="molecule type" value="Genomic_DNA"/>
</dbReference>
<dbReference type="RefSeq" id="XP_458268.2">
    <property type="nucleotide sequence ID" value="XM_458268.1"/>
</dbReference>
<dbReference type="SMR" id="Q6BU51"/>
<dbReference type="FunCoup" id="Q6BU51">
    <property type="interactions" value="249"/>
</dbReference>
<dbReference type="STRING" id="284592.Q6BU51"/>
<dbReference type="GeneID" id="2900042"/>
<dbReference type="KEGG" id="dha:DEHA2C13574g"/>
<dbReference type="VEuPathDB" id="FungiDB:DEHA2C13574g"/>
<dbReference type="eggNOG" id="KOG3068">
    <property type="taxonomic scope" value="Eukaryota"/>
</dbReference>
<dbReference type="HOGENOM" id="CLU_043453_2_1_1"/>
<dbReference type="InParanoid" id="Q6BU51"/>
<dbReference type="OMA" id="WESQINI"/>
<dbReference type="OrthoDB" id="1739576at2759"/>
<dbReference type="Proteomes" id="UP000000599">
    <property type="component" value="Chromosome C"/>
</dbReference>
<dbReference type="GO" id="GO:0005737">
    <property type="term" value="C:cytoplasm"/>
    <property type="evidence" value="ECO:0007669"/>
    <property type="project" value="UniProtKB-SubCell"/>
</dbReference>
<dbReference type="GO" id="GO:0005681">
    <property type="term" value="C:spliceosomal complex"/>
    <property type="evidence" value="ECO:0007669"/>
    <property type="project" value="UniProtKB-KW"/>
</dbReference>
<dbReference type="GO" id="GO:0000350">
    <property type="term" value="P:generation of catalytic spliceosome for second transesterification step"/>
    <property type="evidence" value="ECO:0007669"/>
    <property type="project" value="InterPro"/>
</dbReference>
<dbReference type="FunFam" id="1.10.287.660:FF:000001">
    <property type="entry name" value="pre-mRNA-splicing factor ISY1 homolog"/>
    <property type="match status" value="1"/>
</dbReference>
<dbReference type="Gene3D" id="1.10.287.660">
    <property type="entry name" value="Helix hairpin bin"/>
    <property type="match status" value="1"/>
</dbReference>
<dbReference type="InterPro" id="IPR029012">
    <property type="entry name" value="Helix_hairpin_bin_sf"/>
</dbReference>
<dbReference type="InterPro" id="IPR009360">
    <property type="entry name" value="Isy1"/>
</dbReference>
<dbReference type="InterPro" id="IPR037200">
    <property type="entry name" value="Isy1_sf"/>
</dbReference>
<dbReference type="PANTHER" id="PTHR13021">
    <property type="entry name" value="PRE-MRNA-SPLICING FACTOR ISY1"/>
    <property type="match status" value="1"/>
</dbReference>
<dbReference type="Pfam" id="PF06246">
    <property type="entry name" value="Isy1"/>
    <property type="match status" value="1"/>
</dbReference>
<dbReference type="SUPFAM" id="SSF140102">
    <property type="entry name" value="ISY1 domain-like"/>
    <property type="match status" value="1"/>
</dbReference>
<name>ISY1_DEBHA</name>
<organism>
    <name type="scientific">Debaryomyces hansenii (strain ATCC 36239 / CBS 767 / BCRC 21394 / JCM 1990 / NBRC 0083 / IGC 2968)</name>
    <name type="common">Yeast</name>
    <name type="synonym">Torulaspora hansenii</name>
    <dbReference type="NCBI Taxonomy" id="284592"/>
    <lineage>
        <taxon>Eukaryota</taxon>
        <taxon>Fungi</taxon>
        <taxon>Dikarya</taxon>
        <taxon>Ascomycota</taxon>
        <taxon>Saccharomycotina</taxon>
        <taxon>Pichiomycetes</taxon>
        <taxon>Debaryomycetaceae</taxon>
        <taxon>Debaryomyces</taxon>
    </lineage>
</organism>
<feature type="chain" id="PRO_0000192968" description="Pre-mRNA-splicing factor ISY1">
    <location>
        <begin position="1"/>
        <end position="298"/>
    </location>
</feature>
<accession>Q6BU51</accession>
<reference key="1">
    <citation type="journal article" date="2004" name="Nature">
        <title>Genome evolution in yeasts.</title>
        <authorList>
            <person name="Dujon B."/>
            <person name="Sherman D."/>
            <person name="Fischer G."/>
            <person name="Durrens P."/>
            <person name="Casaregola S."/>
            <person name="Lafontaine I."/>
            <person name="de Montigny J."/>
            <person name="Marck C."/>
            <person name="Neuveglise C."/>
            <person name="Talla E."/>
            <person name="Goffard N."/>
            <person name="Frangeul L."/>
            <person name="Aigle M."/>
            <person name="Anthouard V."/>
            <person name="Babour A."/>
            <person name="Barbe V."/>
            <person name="Barnay S."/>
            <person name="Blanchin S."/>
            <person name="Beckerich J.-M."/>
            <person name="Beyne E."/>
            <person name="Bleykasten C."/>
            <person name="Boisrame A."/>
            <person name="Boyer J."/>
            <person name="Cattolico L."/>
            <person name="Confanioleri F."/>
            <person name="de Daruvar A."/>
            <person name="Despons L."/>
            <person name="Fabre E."/>
            <person name="Fairhead C."/>
            <person name="Ferry-Dumazet H."/>
            <person name="Groppi A."/>
            <person name="Hantraye F."/>
            <person name="Hennequin C."/>
            <person name="Jauniaux N."/>
            <person name="Joyet P."/>
            <person name="Kachouri R."/>
            <person name="Kerrest A."/>
            <person name="Koszul R."/>
            <person name="Lemaire M."/>
            <person name="Lesur I."/>
            <person name="Ma L."/>
            <person name="Muller H."/>
            <person name="Nicaud J.-M."/>
            <person name="Nikolski M."/>
            <person name="Oztas S."/>
            <person name="Ozier-Kalogeropoulos O."/>
            <person name="Pellenz S."/>
            <person name="Potier S."/>
            <person name="Richard G.-F."/>
            <person name="Straub M.-L."/>
            <person name="Suleau A."/>
            <person name="Swennen D."/>
            <person name="Tekaia F."/>
            <person name="Wesolowski-Louvel M."/>
            <person name="Westhof E."/>
            <person name="Wirth B."/>
            <person name="Zeniou-Meyer M."/>
            <person name="Zivanovic Y."/>
            <person name="Bolotin-Fukuhara M."/>
            <person name="Thierry A."/>
            <person name="Bouchier C."/>
            <person name="Caudron B."/>
            <person name="Scarpelli C."/>
            <person name="Gaillardin C."/>
            <person name="Weissenbach J."/>
            <person name="Wincker P."/>
            <person name="Souciet J.-L."/>
        </authorList>
    </citation>
    <scope>NUCLEOTIDE SEQUENCE [LARGE SCALE GENOMIC DNA]</scope>
    <source>
        <strain>ATCC 36239 / CBS 767 / BCRC 21394 / JCM 1990 / NBRC 0083 / IGC 2968</strain>
    </source>
</reference>